<evidence type="ECO:0000255" key="1">
    <source>
        <dbReference type="HAMAP-Rule" id="MF_00503"/>
    </source>
</evidence>
<evidence type="ECO:0000305" key="2"/>
<reference key="1">
    <citation type="journal article" date="2006" name="Proc. Natl. Acad. Sci. U.S.A.">
        <title>Molecular genetic anatomy of inter- and intraserotype variation in the human bacterial pathogen group A Streptococcus.</title>
        <authorList>
            <person name="Beres S.B."/>
            <person name="Richter E.W."/>
            <person name="Nagiec M.J."/>
            <person name="Sumby P."/>
            <person name="Porcella S.F."/>
            <person name="DeLeo F.R."/>
            <person name="Musser J.M."/>
        </authorList>
    </citation>
    <scope>NUCLEOTIDE SEQUENCE [LARGE SCALE GENOMIC DNA]</scope>
    <source>
        <strain>MGAS2096</strain>
    </source>
</reference>
<feature type="chain" id="PRO_0000258492" description="Large ribosomal subunit protein bL9">
    <location>
        <begin position="1"/>
        <end position="150"/>
    </location>
</feature>
<comment type="function">
    <text evidence="1">Binds to the 23S rRNA.</text>
</comment>
<comment type="similarity">
    <text evidence="1">Belongs to the bacterial ribosomal protein bL9 family.</text>
</comment>
<name>RL9_STRPB</name>
<accession>Q1J992</accession>
<organism>
    <name type="scientific">Streptococcus pyogenes serotype M12 (strain MGAS2096)</name>
    <dbReference type="NCBI Taxonomy" id="370553"/>
    <lineage>
        <taxon>Bacteria</taxon>
        <taxon>Bacillati</taxon>
        <taxon>Bacillota</taxon>
        <taxon>Bacilli</taxon>
        <taxon>Lactobacillales</taxon>
        <taxon>Streptococcaceae</taxon>
        <taxon>Streptococcus</taxon>
    </lineage>
</organism>
<sequence length="150" mass="16512">MKVIFLADVKGKGKKGEIKEVPTGYAQNFLIKKNLAKEATSQSIGELKGKQKAEEKAQAEILAEAQAVKAVLDEDKTRVQFQEKVGPDGRTFGSITAKKISEELQKQFGVKVDKRHIVLDHPIRAIGLIEVPVKLHKEVTAEIKLAITEA</sequence>
<protein>
    <recommendedName>
        <fullName evidence="1">Large ribosomal subunit protein bL9</fullName>
    </recommendedName>
    <alternativeName>
        <fullName evidence="2">50S ribosomal protein L9</fullName>
    </alternativeName>
</protein>
<gene>
    <name evidence="1" type="primary">rplI</name>
    <name type="ordered locus">MGAS2096_Spy1867</name>
</gene>
<keyword id="KW-0687">Ribonucleoprotein</keyword>
<keyword id="KW-0689">Ribosomal protein</keyword>
<keyword id="KW-0694">RNA-binding</keyword>
<keyword id="KW-0699">rRNA-binding</keyword>
<proteinExistence type="inferred from homology"/>
<dbReference type="EMBL" id="CP000261">
    <property type="protein sequence ID" value="ABF36919.1"/>
    <property type="molecule type" value="Genomic_DNA"/>
</dbReference>
<dbReference type="SMR" id="Q1J992"/>
<dbReference type="KEGG" id="spj:MGAS2096_Spy1867"/>
<dbReference type="HOGENOM" id="CLU_078938_3_2_9"/>
<dbReference type="GO" id="GO:1990904">
    <property type="term" value="C:ribonucleoprotein complex"/>
    <property type="evidence" value="ECO:0007669"/>
    <property type="project" value="UniProtKB-KW"/>
</dbReference>
<dbReference type="GO" id="GO:0005840">
    <property type="term" value="C:ribosome"/>
    <property type="evidence" value="ECO:0007669"/>
    <property type="project" value="UniProtKB-KW"/>
</dbReference>
<dbReference type="GO" id="GO:0019843">
    <property type="term" value="F:rRNA binding"/>
    <property type="evidence" value="ECO:0007669"/>
    <property type="project" value="UniProtKB-UniRule"/>
</dbReference>
<dbReference type="GO" id="GO:0003735">
    <property type="term" value="F:structural constituent of ribosome"/>
    <property type="evidence" value="ECO:0007669"/>
    <property type="project" value="InterPro"/>
</dbReference>
<dbReference type="GO" id="GO:0006412">
    <property type="term" value="P:translation"/>
    <property type="evidence" value="ECO:0007669"/>
    <property type="project" value="UniProtKB-UniRule"/>
</dbReference>
<dbReference type="FunFam" id="3.40.5.10:FF:000002">
    <property type="entry name" value="50S ribosomal protein L9"/>
    <property type="match status" value="1"/>
</dbReference>
<dbReference type="Gene3D" id="3.10.430.100">
    <property type="entry name" value="Ribosomal protein L9, C-terminal domain"/>
    <property type="match status" value="1"/>
</dbReference>
<dbReference type="Gene3D" id="3.40.5.10">
    <property type="entry name" value="Ribosomal protein L9, N-terminal domain"/>
    <property type="match status" value="1"/>
</dbReference>
<dbReference type="HAMAP" id="MF_00503">
    <property type="entry name" value="Ribosomal_bL9"/>
    <property type="match status" value="1"/>
</dbReference>
<dbReference type="InterPro" id="IPR000244">
    <property type="entry name" value="Ribosomal_bL9"/>
</dbReference>
<dbReference type="InterPro" id="IPR009027">
    <property type="entry name" value="Ribosomal_bL9/RNase_H1_N"/>
</dbReference>
<dbReference type="InterPro" id="IPR020594">
    <property type="entry name" value="Ribosomal_bL9_bac/chp"/>
</dbReference>
<dbReference type="InterPro" id="IPR020069">
    <property type="entry name" value="Ribosomal_bL9_C"/>
</dbReference>
<dbReference type="InterPro" id="IPR036791">
    <property type="entry name" value="Ribosomal_bL9_C_sf"/>
</dbReference>
<dbReference type="InterPro" id="IPR020070">
    <property type="entry name" value="Ribosomal_bL9_N"/>
</dbReference>
<dbReference type="InterPro" id="IPR036935">
    <property type="entry name" value="Ribosomal_bL9_N_sf"/>
</dbReference>
<dbReference type="NCBIfam" id="TIGR00158">
    <property type="entry name" value="L9"/>
    <property type="match status" value="1"/>
</dbReference>
<dbReference type="PANTHER" id="PTHR21368">
    <property type="entry name" value="50S RIBOSOMAL PROTEIN L9"/>
    <property type="match status" value="1"/>
</dbReference>
<dbReference type="Pfam" id="PF03948">
    <property type="entry name" value="Ribosomal_L9_C"/>
    <property type="match status" value="1"/>
</dbReference>
<dbReference type="Pfam" id="PF01281">
    <property type="entry name" value="Ribosomal_L9_N"/>
    <property type="match status" value="1"/>
</dbReference>
<dbReference type="SUPFAM" id="SSF55658">
    <property type="entry name" value="L9 N-domain-like"/>
    <property type="match status" value="1"/>
</dbReference>
<dbReference type="SUPFAM" id="SSF55653">
    <property type="entry name" value="Ribosomal protein L9 C-domain"/>
    <property type="match status" value="1"/>
</dbReference>
<dbReference type="PROSITE" id="PS00651">
    <property type="entry name" value="RIBOSOMAL_L9"/>
    <property type="match status" value="1"/>
</dbReference>